<protein>
    <recommendedName>
        <fullName evidence="1">Putative membrane protein insertion efficiency factor</fullName>
    </recommendedName>
</protein>
<keyword id="KW-1003">Cell membrane</keyword>
<keyword id="KW-0472">Membrane</keyword>
<organism>
    <name type="scientific">Streptococcus pyogenes serotype M3 (strain SSI-1)</name>
    <dbReference type="NCBI Taxonomy" id="193567"/>
    <lineage>
        <taxon>Bacteria</taxon>
        <taxon>Bacillati</taxon>
        <taxon>Bacillota</taxon>
        <taxon>Bacilli</taxon>
        <taxon>Lactobacillales</taxon>
        <taxon>Streptococcaceae</taxon>
        <taxon>Streptococcus</taxon>
    </lineage>
</organism>
<gene>
    <name type="ordered locus">SPs1589</name>
</gene>
<dbReference type="EMBL" id="BA000034">
    <property type="protein sequence ID" value="BAC64684.1"/>
    <property type="molecule type" value="Genomic_DNA"/>
</dbReference>
<dbReference type="KEGG" id="sps:SPs1589"/>
<dbReference type="HOGENOM" id="CLU_144811_5_2_9"/>
<dbReference type="GO" id="GO:0005886">
    <property type="term" value="C:plasma membrane"/>
    <property type="evidence" value="ECO:0007669"/>
    <property type="project" value="UniProtKB-SubCell"/>
</dbReference>
<dbReference type="HAMAP" id="MF_00386">
    <property type="entry name" value="UPF0161_YidD"/>
    <property type="match status" value="1"/>
</dbReference>
<dbReference type="InterPro" id="IPR002696">
    <property type="entry name" value="Membr_insert_effic_factor_YidD"/>
</dbReference>
<dbReference type="NCBIfam" id="TIGR00278">
    <property type="entry name" value="membrane protein insertion efficiency factor YidD"/>
    <property type="match status" value="1"/>
</dbReference>
<dbReference type="PANTHER" id="PTHR33383">
    <property type="entry name" value="MEMBRANE PROTEIN INSERTION EFFICIENCY FACTOR-RELATED"/>
    <property type="match status" value="1"/>
</dbReference>
<dbReference type="PANTHER" id="PTHR33383:SF1">
    <property type="entry name" value="MEMBRANE PROTEIN INSERTION EFFICIENCY FACTOR-RELATED"/>
    <property type="match status" value="1"/>
</dbReference>
<dbReference type="Pfam" id="PF01809">
    <property type="entry name" value="YidD"/>
    <property type="match status" value="1"/>
</dbReference>
<dbReference type="SMART" id="SM01234">
    <property type="entry name" value="Haemolytic"/>
    <property type="match status" value="1"/>
</dbReference>
<evidence type="ECO:0000255" key="1">
    <source>
        <dbReference type="HAMAP-Rule" id="MF_00386"/>
    </source>
</evidence>
<accession>P0DG89</accession>
<accession>P58128</accession>
<accession>P67308</accession>
<proteinExistence type="inferred from homology"/>
<name>YIDD_STRPQ</name>
<comment type="function">
    <text evidence="1">Could be involved in insertion of integral membrane proteins into the membrane.</text>
</comment>
<comment type="subcellular location">
    <subcellularLocation>
        <location evidence="1">Cell membrane</location>
        <topology evidence="1">Peripheral membrane protein</topology>
        <orientation evidence="1">Cytoplasmic side</orientation>
    </subcellularLocation>
</comment>
<comment type="similarity">
    <text evidence="1">Belongs to the UPF0161 family.</text>
</comment>
<feature type="chain" id="PRO_0000411634" description="Putative membrane protein insertion efficiency factor">
    <location>
        <begin position="1"/>
        <end position="86"/>
    </location>
</feature>
<sequence length="86" mass="9511">MKKLLIVSVKAYQKYISPLSPPSCRYKPTCSAYMLTAIEKHGTKGILMGIARILRCHPFVAGGVDPVPEDFSLMRNKNTSKNAEKA</sequence>
<reference key="1">
    <citation type="journal article" date="2003" name="Genome Res.">
        <title>Genome sequence of an M3 strain of Streptococcus pyogenes reveals a large-scale genomic rearrangement in invasive strains and new insights into phage evolution.</title>
        <authorList>
            <person name="Nakagawa I."/>
            <person name="Kurokawa K."/>
            <person name="Yamashita A."/>
            <person name="Nakata M."/>
            <person name="Tomiyasu Y."/>
            <person name="Okahashi N."/>
            <person name="Kawabata S."/>
            <person name="Yamazaki K."/>
            <person name="Shiba T."/>
            <person name="Yasunaga T."/>
            <person name="Hayashi H."/>
            <person name="Hattori M."/>
            <person name="Hamada S."/>
        </authorList>
    </citation>
    <scope>NUCLEOTIDE SEQUENCE [LARGE SCALE GENOMIC DNA]</scope>
    <source>
        <strain>SSI-1</strain>
    </source>
</reference>